<protein>
    <recommendedName>
        <fullName evidence="1">Eukaryotic translation initiation factor 6</fullName>
        <shortName evidence="1">eIF-6</shortName>
    </recommendedName>
</protein>
<proteinExistence type="evidence at transcript level"/>
<gene>
    <name type="primary">eif6</name>
    <name type="ORF">si:ch211-239j9.6</name>
</gene>
<reference key="1">
    <citation type="journal article" date="2004" name="Proc. Natl. Acad. Sci. U.S.A.">
        <title>Hematopoietic gene expression profile in zebrafish kidney marrow.</title>
        <authorList>
            <person name="Song H.-D."/>
            <person name="Sun X.-J."/>
            <person name="Deng M."/>
            <person name="Zhang G.-W."/>
            <person name="Zhou Y."/>
            <person name="Wu X.-Y."/>
            <person name="Sheng Y."/>
            <person name="Chen Y."/>
            <person name="Ruan Z."/>
            <person name="Jiang C.-L."/>
            <person name="Fan H.-Y."/>
            <person name="Zon L.I."/>
            <person name="Kanki J.P."/>
            <person name="Liu T.X."/>
            <person name="Look A.T."/>
            <person name="Chen Z."/>
        </authorList>
    </citation>
    <scope>NUCLEOTIDE SEQUENCE [LARGE SCALE MRNA]</scope>
    <source>
        <tissue>Kidney marrow</tissue>
    </source>
</reference>
<reference key="2">
    <citation type="journal article" date="2013" name="Nature">
        <title>The zebrafish reference genome sequence and its relationship to the human genome.</title>
        <authorList>
            <person name="Howe K."/>
            <person name="Clark M.D."/>
            <person name="Torroja C.F."/>
            <person name="Torrance J."/>
            <person name="Berthelot C."/>
            <person name="Muffato M."/>
            <person name="Collins J.E."/>
            <person name="Humphray S."/>
            <person name="McLaren K."/>
            <person name="Matthews L."/>
            <person name="McLaren S."/>
            <person name="Sealy I."/>
            <person name="Caccamo M."/>
            <person name="Churcher C."/>
            <person name="Scott C."/>
            <person name="Barrett J.C."/>
            <person name="Koch R."/>
            <person name="Rauch G.J."/>
            <person name="White S."/>
            <person name="Chow W."/>
            <person name="Kilian B."/>
            <person name="Quintais L.T."/>
            <person name="Guerra-Assuncao J.A."/>
            <person name="Zhou Y."/>
            <person name="Gu Y."/>
            <person name="Yen J."/>
            <person name="Vogel J.H."/>
            <person name="Eyre T."/>
            <person name="Redmond S."/>
            <person name="Banerjee R."/>
            <person name="Chi J."/>
            <person name="Fu B."/>
            <person name="Langley E."/>
            <person name="Maguire S.F."/>
            <person name="Laird G.K."/>
            <person name="Lloyd D."/>
            <person name="Kenyon E."/>
            <person name="Donaldson S."/>
            <person name="Sehra H."/>
            <person name="Almeida-King J."/>
            <person name="Loveland J."/>
            <person name="Trevanion S."/>
            <person name="Jones M."/>
            <person name="Quail M."/>
            <person name="Willey D."/>
            <person name="Hunt A."/>
            <person name="Burton J."/>
            <person name="Sims S."/>
            <person name="McLay K."/>
            <person name="Plumb B."/>
            <person name="Davis J."/>
            <person name="Clee C."/>
            <person name="Oliver K."/>
            <person name="Clark R."/>
            <person name="Riddle C."/>
            <person name="Elliot D."/>
            <person name="Threadgold G."/>
            <person name="Harden G."/>
            <person name="Ware D."/>
            <person name="Begum S."/>
            <person name="Mortimore B."/>
            <person name="Kerry G."/>
            <person name="Heath P."/>
            <person name="Phillimore B."/>
            <person name="Tracey A."/>
            <person name="Corby N."/>
            <person name="Dunn M."/>
            <person name="Johnson C."/>
            <person name="Wood J."/>
            <person name="Clark S."/>
            <person name="Pelan S."/>
            <person name="Griffiths G."/>
            <person name="Smith M."/>
            <person name="Glithero R."/>
            <person name="Howden P."/>
            <person name="Barker N."/>
            <person name="Lloyd C."/>
            <person name="Stevens C."/>
            <person name="Harley J."/>
            <person name="Holt K."/>
            <person name="Panagiotidis G."/>
            <person name="Lovell J."/>
            <person name="Beasley H."/>
            <person name="Henderson C."/>
            <person name="Gordon D."/>
            <person name="Auger K."/>
            <person name="Wright D."/>
            <person name="Collins J."/>
            <person name="Raisen C."/>
            <person name="Dyer L."/>
            <person name="Leung K."/>
            <person name="Robertson L."/>
            <person name="Ambridge K."/>
            <person name="Leongamornlert D."/>
            <person name="McGuire S."/>
            <person name="Gilderthorp R."/>
            <person name="Griffiths C."/>
            <person name="Manthravadi D."/>
            <person name="Nichol S."/>
            <person name="Barker G."/>
            <person name="Whitehead S."/>
            <person name="Kay M."/>
            <person name="Brown J."/>
            <person name="Murnane C."/>
            <person name="Gray E."/>
            <person name="Humphries M."/>
            <person name="Sycamore N."/>
            <person name="Barker D."/>
            <person name="Saunders D."/>
            <person name="Wallis J."/>
            <person name="Babbage A."/>
            <person name="Hammond S."/>
            <person name="Mashreghi-Mohammadi M."/>
            <person name="Barr L."/>
            <person name="Martin S."/>
            <person name="Wray P."/>
            <person name="Ellington A."/>
            <person name="Matthews N."/>
            <person name="Ellwood M."/>
            <person name="Woodmansey R."/>
            <person name="Clark G."/>
            <person name="Cooper J."/>
            <person name="Tromans A."/>
            <person name="Grafham D."/>
            <person name="Skuce C."/>
            <person name="Pandian R."/>
            <person name="Andrews R."/>
            <person name="Harrison E."/>
            <person name="Kimberley A."/>
            <person name="Garnett J."/>
            <person name="Fosker N."/>
            <person name="Hall R."/>
            <person name="Garner P."/>
            <person name="Kelly D."/>
            <person name="Bird C."/>
            <person name="Palmer S."/>
            <person name="Gehring I."/>
            <person name="Berger A."/>
            <person name="Dooley C.M."/>
            <person name="Ersan-Urun Z."/>
            <person name="Eser C."/>
            <person name="Geiger H."/>
            <person name="Geisler M."/>
            <person name="Karotki L."/>
            <person name="Kirn A."/>
            <person name="Konantz J."/>
            <person name="Konantz M."/>
            <person name="Oberlander M."/>
            <person name="Rudolph-Geiger S."/>
            <person name="Teucke M."/>
            <person name="Lanz C."/>
            <person name="Raddatz G."/>
            <person name="Osoegawa K."/>
            <person name="Zhu B."/>
            <person name="Rapp A."/>
            <person name="Widaa S."/>
            <person name="Langford C."/>
            <person name="Yang F."/>
            <person name="Schuster S.C."/>
            <person name="Carter N.P."/>
            <person name="Harrow J."/>
            <person name="Ning Z."/>
            <person name="Herrero J."/>
            <person name="Searle S.M."/>
            <person name="Enright A."/>
            <person name="Geisler R."/>
            <person name="Plasterk R.H."/>
            <person name="Lee C."/>
            <person name="Westerfield M."/>
            <person name="de Jong P.J."/>
            <person name="Zon L.I."/>
            <person name="Postlethwait J.H."/>
            <person name="Nusslein-Volhard C."/>
            <person name="Hubbard T.J."/>
            <person name="Roest Crollius H."/>
            <person name="Rogers J."/>
            <person name="Stemple D.L."/>
        </authorList>
    </citation>
    <scope>NUCLEOTIDE SEQUENCE [LARGE SCALE GENOMIC DNA]</scope>
    <source>
        <strain>Tuebingen</strain>
    </source>
</reference>
<reference key="3">
    <citation type="submission" date="2003-03" db="EMBL/GenBank/DDBJ databases">
        <authorList>
            <consortium name="NIH - Zebrafish Gene Collection (ZGC) project"/>
        </authorList>
    </citation>
    <scope>NUCLEOTIDE SEQUENCE [LARGE SCALE MRNA]</scope>
</reference>
<sequence>MAVRASFEKNNEIGCFAKLTNTYCLVAIGGSENFYSVFEGELSETMPVIHASIAGCRIIGRMCVGNRHGLLVPNNTTDQELQHIRNCLPDSVRIQRVEERLSALGNVIACNDYVALVHPDLDRETEEILADTLKVEVFRQTVAEQVLVGSYCAFSNQGGLVHAKTSIEDQDELSSLLQVPLVAGTVNRGSEVIAAGMVVNDWCAFCGLDTTSTELSVIESVFRLSETQPSAIATTMRDSLIDSLT</sequence>
<keyword id="KW-0963">Cytoplasm</keyword>
<keyword id="KW-0396">Initiation factor</keyword>
<keyword id="KW-0539">Nucleus</keyword>
<keyword id="KW-0648">Protein biosynthesis</keyword>
<keyword id="KW-1185">Reference proteome</keyword>
<keyword id="KW-0690">Ribosome biogenesis</keyword>
<feature type="chain" id="PRO_0000402096" description="Eukaryotic translation initiation factor 6">
    <location>
        <begin position="1"/>
        <end position="245"/>
    </location>
</feature>
<feature type="sequence conflict" description="In Ref. 3; AAH49488." evidence="2" ref="3">
    <original>V</original>
    <variation>A</variation>
    <location>
        <position position="37"/>
    </location>
</feature>
<feature type="sequence conflict" description="In Ref. 3; AAH71374." evidence="2" ref="3">
    <original>L</original>
    <variation>R</variation>
    <location>
        <position position="208"/>
    </location>
</feature>
<evidence type="ECO:0000255" key="1">
    <source>
        <dbReference type="HAMAP-Rule" id="MF_03132"/>
    </source>
</evidence>
<evidence type="ECO:0000305" key="2"/>
<name>IF6_DANRE</name>
<comment type="function">
    <text evidence="1">Binds to the 60S ribosomal subunit and prevents its association with the 40S ribosomal subunit to form the 80S initiation complex in the cytoplasm. May also be involved in ribosome biogenesis.</text>
</comment>
<comment type="subunit">
    <text evidence="1">Monomer. Associates with the 60S ribosomal subunit.</text>
</comment>
<comment type="subcellular location">
    <subcellularLocation>
        <location evidence="1">Cytoplasm</location>
    </subcellularLocation>
    <subcellularLocation>
        <location evidence="1">Nucleus</location>
        <location evidence="1">Nucleolus</location>
    </subcellularLocation>
    <text evidence="1">Shuttles between cytoplasm and nucleus/nucleolus.</text>
</comment>
<comment type="similarity">
    <text evidence="1">Belongs to the eIF-6 family.</text>
</comment>
<organism>
    <name type="scientific">Danio rerio</name>
    <name type="common">Zebrafish</name>
    <name type="synonym">Brachydanio rerio</name>
    <dbReference type="NCBI Taxonomy" id="7955"/>
    <lineage>
        <taxon>Eukaryota</taxon>
        <taxon>Metazoa</taxon>
        <taxon>Chordata</taxon>
        <taxon>Craniata</taxon>
        <taxon>Vertebrata</taxon>
        <taxon>Euteleostomi</taxon>
        <taxon>Actinopterygii</taxon>
        <taxon>Neopterygii</taxon>
        <taxon>Teleostei</taxon>
        <taxon>Ostariophysi</taxon>
        <taxon>Cypriniformes</taxon>
        <taxon>Danionidae</taxon>
        <taxon>Danioninae</taxon>
        <taxon>Danio</taxon>
    </lineage>
</organism>
<dbReference type="EMBL" id="AY398366">
    <property type="protein sequence ID" value="AAQ97799.1"/>
    <property type="molecule type" value="mRNA"/>
</dbReference>
<dbReference type="EMBL" id="AL929108">
    <property type="protein sequence ID" value="CAE51057.1"/>
    <property type="molecule type" value="Genomic_DNA"/>
</dbReference>
<dbReference type="EMBL" id="BC071374">
    <property type="protein sequence ID" value="AAH71374.1"/>
    <property type="molecule type" value="mRNA"/>
</dbReference>
<dbReference type="EMBL" id="BC049488">
    <property type="protein sequence ID" value="AAH49488.1"/>
    <property type="molecule type" value="mRNA"/>
</dbReference>
<dbReference type="RefSeq" id="NP_957238.1">
    <property type="nucleotide sequence ID" value="NM_200944.1"/>
</dbReference>
<dbReference type="SMR" id="Q6ZM19"/>
<dbReference type="FunCoup" id="Q6ZM19">
    <property type="interactions" value="2245"/>
</dbReference>
<dbReference type="STRING" id="7955.ENSDARP00000015326"/>
<dbReference type="PaxDb" id="7955-ENSDARP00000015326"/>
<dbReference type="Ensembl" id="ENSDART00000016890">
    <property type="protein sequence ID" value="ENSDARP00000015326"/>
    <property type="gene ID" value="ENSDARG00000020232"/>
</dbReference>
<dbReference type="GeneID" id="386850"/>
<dbReference type="KEGG" id="dre:386850"/>
<dbReference type="AGR" id="ZFIN:ZDB-GENE-031118-110"/>
<dbReference type="CTD" id="3692"/>
<dbReference type="ZFIN" id="ZDB-GENE-031118-110">
    <property type="gene designation" value="eif6"/>
</dbReference>
<dbReference type="eggNOG" id="KOG3185">
    <property type="taxonomic scope" value="Eukaryota"/>
</dbReference>
<dbReference type="HOGENOM" id="CLU_071894_0_0_1"/>
<dbReference type="InParanoid" id="Q6ZM19"/>
<dbReference type="OMA" id="WCAFCGM"/>
<dbReference type="OrthoDB" id="4155914at2759"/>
<dbReference type="PhylomeDB" id="Q6ZM19"/>
<dbReference type="TreeFam" id="TF105396"/>
<dbReference type="PRO" id="PR:Q6ZM19"/>
<dbReference type="Proteomes" id="UP000000437">
    <property type="component" value="Chromosome 6"/>
</dbReference>
<dbReference type="Bgee" id="ENSDARG00000020232">
    <property type="expression patterns" value="Expressed in testis and 43 other cell types or tissues"/>
</dbReference>
<dbReference type="ExpressionAtlas" id="Q6ZM19">
    <property type="expression patterns" value="baseline"/>
</dbReference>
<dbReference type="GO" id="GO:0005829">
    <property type="term" value="C:cytosol"/>
    <property type="evidence" value="ECO:0000318"/>
    <property type="project" value="GO_Central"/>
</dbReference>
<dbReference type="GO" id="GO:0005730">
    <property type="term" value="C:nucleolus"/>
    <property type="evidence" value="ECO:0007669"/>
    <property type="project" value="UniProtKB-SubCell"/>
</dbReference>
<dbReference type="GO" id="GO:0005634">
    <property type="term" value="C:nucleus"/>
    <property type="evidence" value="ECO:0000318"/>
    <property type="project" value="GO_Central"/>
</dbReference>
<dbReference type="GO" id="GO:0043023">
    <property type="term" value="F:ribosomal large subunit binding"/>
    <property type="evidence" value="ECO:0000318"/>
    <property type="project" value="GO_Central"/>
</dbReference>
<dbReference type="GO" id="GO:0003743">
    <property type="term" value="F:translation initiation factor activity"/>
    <property type="evidence" value="ECO:0007669"/>
    <property type="project" value="UniProtKB-UniRule"/>
</dbReference>
<dbReference type="GO" id="GO:1902626">
    <property type="term" value="P:assembly of large subunit precursor of preribosome"/>
    <property type="evidence" value="ECO:0000318"/>
    <property type="project" value="GO_Central"/>
</dbReference>
<dbReference type="GO" id="GO:0042256">
    <property type="term" value="P:cytosolic ribosome assembly"/>
    <property type="evidence" value="ECO:0007669"/>
    <property type="project" value="UniProtKB-UniRule"/>
</dbReference>
<dbReference type="GO" id="GO:0000460">
    <property type="term" value="P:maturation of 5.8S rRNA"/>
    <property type="evidence" value="ECO:0000318"/>
    <property type="project" value="GO_Central"/>
</dbReference>
<dbReference type="GO" id="GO:0000470">
    <property type="term" value="P:maturation of LSU-rRNA"/>
    <property type="evidence" value="ECO:0000318"/>
    <property type="project" value="GO_Central"/>
</dbReference>
<dbReference type="GO" id="GO:0000054">
    <property type="term" value="P:ribosomal subunit export from nucleus"/>
    <property type="evidence" value="ECO:0000318"/>
    <property type="project" value="GO_Central"/>
</dbReference>
<dbReference type="CDD" id="cd00527">
    <property type="entry name" value="IF6"/>
    <property type="match status" value="1"/>
</dbReference>
<dbReference type="FunFam" id="3.75.10.10:FF:000001">
    <property type="entry name" value="Eukaryotic translation initiation factor 6"/>
    <property type="match status" value="1"/>
</dbReference>
<dbReference type="Gene3D" id="3.75.10.10">
    <property type="entry name" value="L-arginine/glycine Amidinotransferase, Chain A"/>
    <property type="match status" value="1"/>
</dbReference>
<dbReference type="HAMAP" id="MF_00032">
    <property type="entry name" value="eIF_6"/>
    <property type="match status" value="1"/>
</dbReference>
<dbReference type="InterPro" id="IPR002769">
    <property type="entry name" value="eIF6"/>
</dbReference>
<dbReference type="NCBIfam" id="TIGR00323">
    <property type="entry name" value="eIF-6"/>
    <property type="match status" value="1"/>
</dbReference>
<dbReference type="PANTHER" id="PTHR10784">
    <property type="entry name" value="TRANSLATION INITIATION FACTOR 6"/>
    <property type="match status" value="1"/>
</dbReference>
<dbReference type="Pfam" id="PF01912">
    <property type="entry name" value="eIF-6"/>
    <property type="match status" value="1"/>
</dbReference>
<dbReference type="PIRSF" id="PIRSF006413">
    <property type="entry name" value="IF-6"/>
    <property type="match status" value="1"/>
</dbReference>
<dbReference type="SMART" id="SM00654">
    <property type="entry name" value="eIF6"/>
    <property type="match status" value="1"/>
</dbReference>
<dbReference type="SUPFAM" id="SSF55909">
    <property type="entry name" value="Pentein"/>
    <property type="match status" value="1"/>
</dbReference>
<accession>Q6ZM19</accession>
<accession>Q6IQN0</accession>
<accession>Q7ZWC1</accession>